<reference key="1">
    <citation type="journal article" date="2001" name="Eur. J. Biochem.">
        <title>Human synemin gene generates splice variants encoding two distinct intermediate filament proteins.</title>
        <authorList>
            <person name="Titeux M."/>
            <person name="Brocheriou V."/>
            <person name="Xue Z."/>
            <person name="Gao J."/>
            <person name="Pellissier J.-F."/>
            <person name="Guicheney P."/>
            <person name="Paulin D."/>
            <person name="Li Z."/>
        </authorList>
    </citation>
    <scope>NUCLEOTIDE SEQUENCE [MRNA] (ISOFORMS 1 AND 2)</scope>
    <scope>SUBUNIT</scope>
    <scope>TISSUE SPECIFICITY</scope>
    <scope>VARIANTS TRP-355 AND LEU-567</scope>
    <source>
        <tissue>Placenta</tissue>
        <tissue>Skeletal muscle</tissue>
    </source>
</reference>
<reference key="2">
    <citation type="journal article" date="2001" name="Proc. Natl. Acad. Sci. U.S.A.">
        <title>Desmuslin, an intermediate filament protein that interacts with alpha-dystrobrevin and desmin.</title>
        <authorList>
            <person name="Mizuno Y."/>
            <person name="Thompson T.G."/>
            <person name="Guyon J.R."/>
            <person name="Lidov H.G.W."/>
            <person name="Brosius M."/>
            <person name="Imamura M."/>
            <person name="Ozawa E."/>
            <person name="Watkins S.C."/>
            <person name="Kunkel L.M."/>
        </authorList>
    </citation>
    <scope>NUCLEOTIDE SEQUENCE [MRNA] (ISOFORM 2)</scope>
    <scope>FUNCTION</scope>
    <scope>INTERACTION WITH DES AND DTNA</scope>
    <scope>SUBCELLULAR LOCATION</scope>
    <scope>TISSUE SPECIFICITY</scope>
    <scope>VARIANT ALA-272</scope>
    <source>
        <tissue>Skeletal muscle</tissue>
    </source>
</reference>
<reference key="3">
    <citation type="submission" date="2004-04" db="EMBL/GenBank/DDBJ databases">
        <title>Synemin gene generates different spliced isoforms expressed selectively in either astrocytes or neurons.</title>
        <authorList>
            <person name="Xue Z."/>
            <person name="Izmiryan A."/>
            <person name="Paulin D."/>
            <person name="Li Z."/>
        </authorList>
    </citation>
    <scope>NUCLEOTIDE SEQUENCE [MRNA] (ISOFORM 3)</scope>
</reference>
<reference key="4">
    <citation type="submission" date="2003-01" db="EMBL/GenBank/DDBJ databases">
        <authorList>
            <person name="Nagase T."/>
            <person name="Kikuno R."/>
            <person name="Yamakawa H."/>
            <person name="Ohara O."/>
        </authorList>
    </citation>
    <scope>NUCLEOTIDE SEQUENCE [LARGE SCALE MRNA] (ISOFORM 1)</scope>
    <scope>VARIANTS TRP-355 AND SER-462</scope>
    <source>
        <tissue>Brain</tissue>
    </source>
</reference>
<reference key="5">
    <citation type="journal article" date="2006" name="Nature">
        <title>Analysis of the DNA sequence and duplication history of human chromosome 15.</title>
        <authorList>
            <person name="Zody M.C."/>
            <person name="Garber M."/>
            <person name="Sharpe T."/>
            <person name="Young S.K."/>
            <person name="Rowen L."/>
            <person name="O'Neill K."/>
            <person name="Whittaker C.A."/>
            <person name="Kamal M."/>
            <person name="Chang J.L."/>
            <person name="Cuomo C.A."/>
            <person name="Dewar K."/>
            <person name="FitzGerald M.G."/>
            <person name="Kodira C.D."/>
            <person name="Madan A."/>
            <person name="Qin S."/>
            <person name="Yang X."/>
            <person name="Abbasi N."/>
            <person name="Abouelleil A."/>
            <person name="Arachchi H.M."/>
            <person name="Baradarani L."/>
            <person name="Birditt B."/>
            <person name="Bloom S."/>
            <person name="Bloom T."/>
            <person name="Borowsky M.L."/>
            <person name="Burke J."/>
            <person name="Butler J."/>
            <person name="Cook A."/>
            <person name="DeArellano K."/>
            <person name="DeCaprio D."/>
            <person name="Dorris L. III"/>
            <person name="Dors M."/>
            <person name="Eichler E.E."/>
            <person name="Engels R."/>
            <person name="Fahey J."/>
            <person name="Fleetwood P."/>
            <person name="Friedman C."/>
            <person name="Gearin G."/>
            <person name="Hall J.L."/>
            <person name="Hensley G."/>
            <person name="Johnson E."/>
            <person name="Jones C."/>
            <person name="Kamat A."/>
            <person name="Kaur A."/>
            <person name="Locke D.P."/>
            <person name="Madan A."/>
            <person name="Munson G."/>
            <person name="Jaffe D.B."/>
            <person name="Lui A."/>
            <person name="Macdonald P."/>
            <person name="Mauceli E."/>
            <person name="Naylor J.W."/>
            <person name="Nesbitt R."/>
            <person name="Nicol R."/>
            <person name="O'Leary S.B."/>
            <person name="Ratcliffe A."/>
            <person name="Rounsley S."/>
            <person name="She X."/>
            <person name="Sneddon K.M.B."/>
            <person name="Stewart S."/>
            <person name="Sougnez C."/>
            <person name="Stone S.M."/>
            <person name="Topham K."/>
            <person name="Vincent D."/>
            <person name="Wang S."/>
            <person name="Zimmer A.R."/>
            <person name="Birren B.W."/>
            <person name="Hood L."/>
            <person name="Lander E.S."/>
            <person name="Nusbaum C."/>
        </authorList>
    </citation>
    <scope>NUCLEOTIDE SEQUENCE [LARGE SCALE GENOMIC DNA]</scope>
</reference>
<reference key="6">
    <citation type="journal article" date="2004" name="Genome Res.">
        <title>The status, quality, and expansion of the NIH full-length cDNA project: the Mammalian Gene Collection (MGC).</title>
        <authorList>
            <consortium name="The MGC Project Team"/>
        </authorList>
    </citation>
    <scope>NUCLEOTIDE SEQUENCE [LARGE SCALE MRNA] (ISOFORM 1)</scope>
    <scope>VARIANTS TRP-355; SER-462 AND GLY-1386</scope>
</reference>
<reference key="7">
    <citation type="journal article" date="1997" name="DNA Res.">
        <title>Prediction of the coding sequences of unidentified human genes. VII. The complete sequences of 100 new cDNA clones from brain which can code for large proteins in vitro.</title>
        <authorList>
            <person name="Nagase T."/>
            <person name="Ishikawa K."/>
            <person name="Nakajima D."/>
            <person name="Ohira M."/>
            <person name="Seki N."/>
            <person name="Miyajima N."/>
            <person name="Tanaka A."/>
            <person name="Kotani H."/>
            <person name="Nomura N."/>
            <person name="Ohara O."/>
        </authorList>
    </citation>
    <scope>NUCLEOTIDE SEQUENCE [LARGE SCALE MRNA] OF 192-1565 (ISOFORM 1)</scope>
    <source>
        <tissue>Brain</tissue>
    </source>
</reference>
<reference key="8">
    <citation type="journal article" date="2003" name="Exp. Neurol.">
        <title>Synemin expression in developing normal and pathological human retina and lens.</title>
        <authorList>
            <person name="Tawk M."/>
            <person name="Titeux M."/>
            <person name="Fallet C."/>
            <person name="Li Z."/>
            <person name="Daumas-Duport C."/>
            <person name="Cavalcante L.A."/>
            <person name="Paulin D."/>
            <person name="Moura-Neto V."/>
        </authorList>
    </citation>
    <scope>DEVELOPMENTAL STAGE</scope>
</reference>
<reference key="9">
    <citation type="journal article" date="2006" name="Biochem. Biophys. Res. Commun.">
        <title>Interactions of intermediate filament protein synemin with dystrophin and utrophin.</title>
        <authorList>
            <person name="Bhosle R.C."/>
            <person name="Michele D.E."/>
            <person name="Campbell K.P."/>
            <person name="Li Z."/>
            <person name="Robson R.M."/>
        </authorList>
    </citation>
    <scope>FUNCTION</scope>
    <scope>INTERACTION WITH DMD AND UTRN</scope>
</reference>
<reference key="10">
    <citation type="journal article" date="2006" name="Cell">
        <title>Global, in vivo, and site-specific phosphorylation dynamics in signaling networks.</title>
        <authorList>
            <person name="Olsen J.V."/>
            <person name="Blagoev B."/>
            <person name="Gnad F."/>
            <person name="Macek B."/>
            <person name="Kumar C."/>
            <person name="Mortensen P."/>
            <person name="Mann M."/>
        </authorList>
    </citation>
    <scope>PHOSPHORYLATION [LARGE SCALE ANALYSIS] AT SER-1184</scope>
    <scope>IDENTIFICATION BY MASS SPECTROMETRY [LARGE SCALE ANALYSIS]</scope>
    <source>
        <tissue>Cervix carcinoma</tissue>
    </source>
</reference>
<reference key="11">
    <citation type="journal article" date="2008" name="Biochem. J.">
        <title>Human alpha-synemin interacts directly with vinculin and metavinculin.</title>
        <authorList>
            <person name="Sun N."/>
            <person name="Critchley D.R."/>
            <person name="Paulin D."/>
            <person name="Li Z."/>
            <person name="Robson R.M."/>
        </authorList>
    </citation>
    <scope>FUNCTION</scope>
    <scope>INTERACTION WITH VCL</scope>
</reference>
<reference key="12">
    <citation type="journal article" date="2008" name="Exp. Cell Res.">
        <title>Identification of a repeated domain within mammalian alpha-synemin that interacts directly with talin.</title>
        <authorList>
            <person name="Sun N."/>
            <person name="Critchley D.R."/>
            <person name="Paulin D."/>
            <person name="Li Z."/>
            <person name="Robson R.M."/>
        </authorList>
    </citation>
    <scope>INTERACTION WITH TLN1</scope>
    <scope>SUBCELLULAR LOCATION</scope>
</reference>
<reference key="13">
    <citation type="journal article" date="2008" name="Mol. Cell">
        <title>Kinase-selective enrichment enables quantitative phosphoproteomics of the kinome across the cell cycle.</title>
        <authorList>
            <person name="Daub H."/>
            <person name="Olsen J.V."/>
            <person name="Bairlein M."/>
            <person name="Gnad F."/>
            <person name="Oppermann F.S."/>
            <person name="Korner R."/>
            <person name="Greff Z."/>
            <person name="Keri G."/>
            <person name="Stemmann O."/>
            <person name="Mann M."/>
        </authorList>
    </citation>
    <scope>PHOSPHORYLATION [LARGE SCALE ANALYSIS] AT SER-1044; SER-1049 AND SER-1435</scope>
    <scope>IDENTIFICATION BY MASS SPECTROMETRY [LARGE SCALE ANALYSIS]</scope>
    <source>
        <tissue>Cervix carcinoma</tissue>
    </source>
</reference>
<reference key="14">
    <citation type="journal article" date="2008" name="Proc. Natl. Acad. Sci. U.S.A.">
        <title>A quantitative atlas of mitotic phosphorylation.</title>
        <authorList>
            <person name="Dephoure N."/>
            <person name="Zhou C."/>
            <person name="Villen J."/>
            <person name="Beausoleil S.A."/>
            <person name="Bakalarski C.E."/>
            <person name="Elledge S.J."/>
            <person name="Gygi S.P."/>
        </authorList>
    </citation>
    <scope>PHOSPHORYLATION [LARGE SCALE ANALYSIS] AT SER-429; THR-598 AND SER-1181</scope>
    <scope>IDENTIFICATION BY MASS SPECTROMETRY [LARGE SCALE ANALYSIS]</scope>
    <source>
        <tissue>Cervix carcinoma</tissue>
    </source>
</reference>
<reference key="15">
    <citation type="journal article" date="2010" name="Sci. Signal.">
        <title>Quantitative phosphoproteomics reveals widespread full phosphorylation site occupancy during mitosis.</title>
        <authorList>
            <person name="Olsen J.V."/>
            <person name="Vermeulen M."/>
            <person name="Santamaria A."/>
            <person name="Kumar C."/>
            <person name="Miller M.L."/>
            <person name="Jensen L.J."/>
            <person name="Gnad F."/>
            <person name="Cox J."/>
            <person name="Jensen T.S."/>
            <person name="Nigg E.A."/>
            <person name="Brunak S."/>
            <person name="Mann M."/>
        </authorList>
    </citation>
    <scope>PHOSPHORYLATION [LARGE SCALE ANALYSIS] AT SER-1181</scope>
    <scope>IDENTIFICATION BY MASS SPECTROMETRY [LARGE SCALE ANALYSIS]</scope>
    <source>
        <tissue>Cervix carcinoma</tissue>
    </source>
</reference>
<reference key="16">
    <citation type="journal article" date="2013" name="J. Proteome Res.">
        <title>Toward a comprehensive characterization of a human cancer cell phosphoproteome.</title>
        <authorList>
            <person name="Zhou H."/>
            <person name="Di Palma S."/>
            <person name="Preisinger C."/>
            <person name="Peng M."/>
            <person name="Polat A.N."/>
            <person name="Heck A.J."/>
            <person name="Mohammed S."/>
        </authorList>
    </citation>
    <scope>PHOSPHORYLATION [LARGE SCALE ANALYSIS] AT SER-429; THR-598; THR-651; SER-653; SER-1044; SER-1049; SER-1181 AND SER-1435</scope>
    <scope>IDENTIFICATION BY MASS SPECTROMETRY [LARGE SCALE ANALYSIS]</scope>
    <source>
        <tissue>Cervix carcinoma</tissue>
    </source>
</reference>
<reference key="17">
    <citation type="journal article" date="2014" name="J. Proteomics">
        <title>An enzyme assisted RP-RPLC approach for in-depth analysis of human liver phosphoproteome.</title>
        <authorList>
            <person name="Bian Y."/>
            <person name="Song C."/>
            <person name="Cheng K."/>
            <person name="Dong M."/>
            <person name="Wang F."/>
            <person name="Huang J."/>
            <person name="Sun D."/>
            <person name="Wang L."/>
            <person name="Ye M."/>
            <person name="Zou H."/>
        </authorList>
    </citation>
    <scope>PHOSPHORYLATION [LARGE SCALE ANALYSIS] AT SER-429; SER-1044 AND SER-1049</scope>
    <scope>IDENTIFICATION BY MASS SPECTROMETRY [LARGE SCALE ANALYSIS]</scope>
    <source>
        <tissue>Liver</tissue>
    </source>
</reference>
<reference key="18">
    <citation type="journal article" date="2001" name="BMC Genet.">
        <title>Genomic organization and single-nucleotide polymorphism map of desmuslin, a novel intermediate filament protein on chromosome 15q26.3.</title>
        <authorList>
            <person name="Mizuno Y."/>
            <person name="Puca A.A."/>
            <person name="O'Brien K.F."/>
            <person name="Beggs A.H."/>
            <person name="Kunkel L.M."/>
        </authorList>
    </citation>
    <scope>VARIANTS ILE-330; TRP-338; LEU-567; ALA-612; LEU-761; TRP-946; ARG-976; LEU-1059; PRO-1067 AND LEU-1077</scope>
</reference>
<keyword id="KW-0002">3D-structure</keyword>
<keyword id="KW-0025">Alternative splicing</keyword>
<keyword id="KW-0965">Cell junction</keyword>
<keyword id="KW-0175">Coiled coil</keyword>
<keyword id="KW-0963">Cytoplasm</keyword>
<keyword id="KW-0206">Cytoskeleton</keyword>
<keyword id="KW-0403">Intermediate filament</keyword>
<keyword id="KW-0488">Methylation</keyword>
<keyword id="KW-0597">Phosphoprotein</keyword>
<keyword id="KW-1267">Proteomics identification</keyword>
<keyword id="KW-1185">Reference proteome</keyword>
<gene>
    <name evidence="18" type="primary">SYNM</name>
    <name type="synonym">DMN</name>
    <name type="synonym">KIAA0353</name>
    <name type="synonym">SYN</name>
</gene>
<sequence>MLSWRLQTGPEKAELQELNARLYDYVCRVRELERENLLLEEELRGRRGREGLWAEGQARCAEEARSLRQQLDELSWATALAEGERDALRRELRELQRLDAEERAARGRLDAELGAQQRELQEALGARAALEALLGRLQAERRGLDAAHERDVRELRARAASLTMHFRARATGPAAPPPRLREVHDSYALLVAESWRETVQLYEDEVRELEEALRRGQESRLQAEEETRLCAQEAEALRREALGLEQLRARLEDALLRMREEYGIQAEERQRVIDCLEDEKATLTLAMADWLRDYQDLLQVKTGLSLEVATYRALLEGESNPEIVIWAEHVENMPSEFRNKSYHYTDSLLQRENERNLFSRQKAPLASFNHSSALYSNLSGHRGSQTGTSIGGDARRGFLGSGYSSSATTQQENSYGKAVSSQTNVRTFSPTYGLLRNTEAQVKTFPDRPKAGDTREVPVYIGEDSTIARESYRDRRDKVAAGASESTRSNERTVILGKKTEVKATREQERNRPETIRTKPEEKMFDSKEKASEERNLRWEELTKLDKEARQRESQQMKEKAKEKDSPKEKSVREREVPISLEVSQDRRAEVSPKGLQTPVKDAGGGTGREAEARELRFRLGTSDATGSLQGDSMTETVAENIVTSILKQFTQSPETEASADSFPDTKVTYVDRKELPGERKTKTEIVVESKLTEDVDVSDEAGLDYLLSKDIKEVGLKGKSAEQMIGDIINLGLKGREGRAKVVNVEIVEEPVSYVSGEKPEEFSVPFKVEEVEDVSPGPWGLVKEEEGYGESDVTFSVNQHRRTKQPQENTTHVEEVTEAGDSEGEQSYFVSTPDEHPGGHDRDDGSVYGQIHIEEESTIRYSWQDEIVQGTRRRTQKDGAVGEKVVKPLDVPAPSLEGDLGSTHWKEQARSGEFHAEPTVIEKEIKIPHEFHTSMKGISSKEPRQQLVEVIGQLEETLPERMREELSALTREGQGGPGSVSVDVKKVQGAGGSSVTLVAEVNVSQTVDADRLDLEELSKDEASEMEKAVESVVRESLSRQRSPAPGSPDEEGGAEAPAAGIRFRRWATRELYIPSGESEVAGGASHSSGQRTPQGPVSATVEVSSPTGFAQSQVLEDVSQAARHIKLGPSEVWRTERMSYEGPTAEVVEVSAGGDLSQAASPTGASRSVRHVTLGPGQSPLSREVIFLGPAPACPEAWGSPEPGPAESSADMDGSGRHSTFGCRQFHAEKEIIFQGPISAAGKVGDYFATEESVGTQTSVRQLQLGPKEGFSGQIQFTAPLSDKVELGVIGDSVHMEGLPGSSTSIRHISIGPQRHQTTQQIVYHGLVPQLGESGDSESTVHGEGSADVHQATHSHTSGRQTVMTEKSTFQSVVSESPQEDSAEDTSGAEMTSGVSRSFRHIRLGPTETETSEHIAIRGPVSRTFVLAGSADSPELGKLADSSRTLRHIAPGPKETSFTFQMDVSNVEAIRSRTQEAGALGVSDRGSWRDADSRNDQAVGVSFKASAGEGDQAHREQGKEQAMFDKKVQLQRMVDQRSVISDEKKVALLYLDNEEEENDGHWF</sequence>
<feature type="chain" id="PRO_0000063778" description="Synemin">
    <location>
        <begin position="1"/>
        <end position="1565"/>
    </location>
</feature>
<feature type="domain" description="IF rod" evidence="3">
    <location>
        <begin position="11"/>
        <end position="322"/>
    </location>
</feature>
<feature type="region of interest" description="Head">
    <location>
        <begin position="1"/>
        <end position="10"/>
    </location>
</feature>
<feature type="region of interest" description="Interaction with DMD and UTRN" evidence="10">
    <location>
        <begin position="11"/>
        <end position="320"/>
    </location>
</feature>
<feature type="region of interest" description="Coil 1A">
    <location>
        <begin position="11"/>
        <end position="49"/>
    </location>
</feature>
<feature type="region of interest" description="Linker 1">
    <location>
        <begin position="50"/>
        <end position="58"/>
    </location>
</feature>
<feature type="region of interest" description="Coil 1B">
    <location>
        <begin position="59"/>
        <end position="163"/>
    </location>
</feature>
<feature type="region of interest" description="Linker 12">
    <location>
        <begin position="164"/>
        <end position="186"/>
    </location>
</feature>
<feature type="region of interest" description="Coil 2">
    <location>
        <begin position="187"/>
        <end position="300"/>
    </location>
</feature>
<feature type="region of interest" description="Tail">
    <location>
        <begin position="301"/>
        <end position="1565"/>
    </location>
</feature>
<feature type="region of interest" description="Disordered" evidence="4">
    <location>
        <begin position="401"/>
        <end position="421"/>
    </location>
</feature>
<feature type="region of interest" description="Disordered" evidence="4">
    <location>
        <begin position="472"/>
        <end position="609"/>
    </location>
</feature>
<feature type="region of interest" description="Disordered" evidence="4">
    <location>
        <begin position="1019"/>
        <end position="1060"/>
    </location>
</feature>
<feature type="region of interest" description="Disordered" evidence="4">
    <location>
        <begin position="1080"/>
        <end position="1105"/>
    </location>
</feature>
<feature type="region of interest" description="Interaction with TLN1 and VCL" evidence="11 12">
    <location>
        <begin position="1152"/>
        <end position="1463"/>
    </location>
</feature>
<feature type="region of interest" description="Disordered" evidence="4">
    <location>
        <begin position="1198"/>
        <end position="1221"/>
    </location>
</feature>
<feature type="region of interest" description="Interaction with DMD and UTRN" evidence="10">
    <location>
        <begin position="1244"/>
        <end position="1563"/>
    </location>
</feature>
<feature type="region of interest" description="Disordered" evidence="4">
    <location>
        <begin position="1332"/>
        <end position="1415"/>
    </location>
</feature>
<feature type="region of interest" description="Disordered" evidence="4">
    <location>
        <begin position="1505"/>
        <end position="1525"/>
    </location>
</feature>
<feature type="compositionally biased region" description="Polar residues" evidence="4">
    <location>
        <begin position="402"/>
        <end position="421"/>
    </location>
</feature>
<feature type="compositionally biased region" description="Basic and acidic residues" evidence="4">
    <location>
        <begin position="498"/>
        <end position="577"/>
    </location>
</feature>
<feature type="compositionally biased region" description="Basic and acidic residues" evidence="4">
    <location>
        <begin position="1019"/>
        <end position="1040"/>
    </location>
</feature>
<feature type="compositionally biased region" description="Polar residues" evidence="4">
    <location>
        <begin position="1087"/>
        <end position="1105"/>
    </location>
</feature>
<feature type="compositionally biased region" description="Polar residues" evidence="4">
    <location>
        <begin position="1354"/>
        <end position="1379"/>
    </location>
</feature>
<feature type="compositionally biased region" description="Basic and acidic residues" evidence="4">
    <location>
        <begin position="1513"/>
        <end position="1525"/>
    </location>
</feature>
<feature type="modified residue" description="Phosphoserine" evidence="20 23 24">
    <location>
        <position position="429"/>
    </location>
</feature>
<feature type="modified residue" description="Phosphothreonine" evidence="20 23">
    <location>
        <position position="598"/>
    </location>
</feature>
<feature type="modified residue" description="Phosphothreonine" evidence="23">
    <location>
        <position position="651"/>
    </location>
</feature>
<feature type="modified residue" description="Phosphoserine" evidence="23">
    <location>
        <position position="653"/>
    </location>
</feature>
<feature type="modified residue" description="Phosphoserine" evidence="2">
    <location>
        <position position="777"/>
    </location>
</feature>
<feature type="modified residue" description="Phosphoserine" evidence="21 23 24">
    <location>
        <position position="1044"/>
    </location>
</feature>
<feature type="modified residue" description="Phosphoserine" evidence="21 23 24">
    <location>
        <position position="1049"/>
    </location>
</feature>
<feature type="modified residue" description="Phosphoserine" evidence="2">
    <location>
        <position position="1077"/>
    </location>
</feature>
<feature type="modified residue" description="Phosphoserine" evidence="2">
    <location>
        <position position="1087"/>
    </location>
</feature>
<feature type="modified residue" description="Phosphoserine" evidence="20 22 23">
    <location>
        <position position="1181"/>
    </location>
</feature>
<feature type="modified residue" description="Phosphoserine" evidence="19">
    <location>
        <position position="1184"/>
    </location>
</feature>
<feature type="modified residue" description="Phosphoserine" evidence="21 23">
    <location>
        <position position="1435"/>
    </location>
</feature>
<feature type="modified residue" description="Omega-N-methylarginine" evidence="2">
    <location>
        <position position="1487"/>
    </location>
</feature>
<feature type="splice variant" id="VSP_036478" description="In isoform 3." evidence="16">
    <original>EFRN</original>
    <variation>DGCE</variation>
    <location>
        <begin position="336"/>
        <end position="339"/>
    </location>
</feature>
<feature type="splice variant" id="VSP_036479" description="In isoform 3." evidence="16">
    <location>
        <begin position="340"/>
        <end position="1565"/>
    </location>
</feature>
<feature type="splice variant" id="VSP_002465" description="In isoform 2." evidence="14 15">
    <location>
        <begin position="1152"/>
        <end position="1463"/>
    </location>
</feature>
<feature type="sequence variant" id="VAR_012295" description="In dbSNP:rs2305445." evidence="5">
    <original>V</original>
    <variation>A</variation>
    <location>
        <position position="272"/>
    </location>
</feature>
<feature type="sequence variant" id="VAR_012296" description="In dbSNP:rs5030691." evidence="6">
    <original>V</original>
    <variation>I</variation>
    <location>
        <position position="330"/>
    </location>
</feature>
<feature type="sequence variant" id="VAR_012297" evidence="6">
    <original>R</original>
    <variation>W</variation>
    <location>
        <position position="338"/>
    </location>
</feature>
<feature type="sequence variant" id="VAR_059378" description="In dbSNP:rs3743242." evidence="7 9 13">
    <original>R</original>
    <variation>W</variation>
    <location>
        <position position="355"/>
    </location>
</feature>
<feature type="sequence variant" id="VAR_059379" description="In dbSNP:rs3134595." evidence="9 13">
    <original>G</original>
    <variation>S</variation>
    <location>
        <position position="462"/>
    </location>
</feature>
<feature type="sequence variant" id="VAR_012298" description="In dbSNP:rs3743244." evidence="6 7">
    <original>P</original>
    <variation>L</variation>
    <location>
        <position position="567"/>
    </location>
</feature>
<feature type="sequence variant" id="VAR_012299" description="In dbSNP:rs5030692." evidence="6">
    <original>E</original>
    <variation>A</variation>
    <location>
        <position position="612"/>
    </location>
</feature>
<feature type="sequence variant" id="VAR_012300" description="In dbSNP:rs3743247." evidence="6">
    <original>P</original>
    <variation>L</variation>
    <location>
        <position position="761"/>
    </location>
</feature>
<feature type="sequence variant" id="VAR_012301" description="In dbSNP:rs5030694." evidence="6">
    <original>R</original>
    <variation>W</variation>
    <location>
        <position position="946"/>
    </location>
</feature>
<feature type="sequence variant" id="VAR_012302" description="In dbSNP:rs5030695." evidence="6">
    <original>Q</original>
    <variation>R</variation>
    <location>
        <position position="976"/>
    </location>
</feature>
<feature type="sequence variant" id="VAR_012303" description="In dbSNP:rs5030697." evidence="6">
    <original>P</original>
    <variation>L</variation>
    <location>
        <position position="1059"/>
    </location>
</feature>
<feature type="sequence variant" id="VAR_012304" description="In dbSNP:rs5030698." evidence="6">
    <original>R</original>
    <variation>P</variation>
    <location>
        <position position="1067"/>
    </location>
</feature>
<feature type="sequence variant" id="VAR_012305" description="In dbSNP:rs5030699." evidence="6">
    <original>S</original>
    <variation>L</variation>
    <location>
        <position position="1077"/>
    </location>
</feature>
<feature type="sequence variant" id="VAR_059380" description="In dbSNP:rs9920074.">
    <original>G</original>
    <variation>S</variation>
    <location>
        <position position="1130"/>
    </location>
</feature>
<feature type="sequence variant" id="VAR_059381" description="In dbSNP:rs7167599.">
    <original>G</original>
    <variation>A</variation>
    <location>
        <position position="1345"/>
    </location>
</feature>
<feature type="sequence variant" id="VAR_012306" description="In dbSNP:rs2292288." evidence="9">
    <original>E</original>
    <variation>G</variation>
    <location>
        <position position="1386"/>
    </location>
</feature>
<feature type="sequence variant" id="VAR_012307" description="In dbSNP:rs2292287.">
    <original>F</original>
    <variation>C</variation>
    <location>
        <position position="1462"/>
    </location>
</feature>
<feature type="sequence conflict" description="In Ref. 1; CAC83858/CAC83859 and 3; CAG27071." evidence="17" ref="1 3">
    <original>W</original>
    <variation>L</variation>
    <location>
        <position position="4"/>
    </location>
</feature>
<feature type="sequence conflict" description="In Ref. 1; CAC83858/CAC83859." evidence="17" ref="1">
    <location>
        <position position="24"/>
    </location>
</feature>
<feature type="sequence conflict" description="In Ref. 1; CAC83858/CAC83859." evidence="17" ref="1">
    <location>
        <position position="52"/>
    </location>
</feature>
<feature type="sequence conflict" description="In Ref. 3; CAG27071." evidence="17" ref="3">
    <original>E</original>
    <variation>G</variation>
    <location>
        <position position="197"/>
    </location>
</feature>
<feature type="sequence conflict" description="In Ref. 3; CAG27071." evidence="17" ref="3">
    <original>A</original>
    <variation>T</variation>
    <location>
        <position position="241"/>
    </location>
</feature>
<feature type="sequence conflict" description="In Ref. 3; CAG27071." evidence="17" ref="3">
    <original>D</original>
    <variation>G</variation>
    <location>
        <position position="274"/>
    </location>
</feature>
<feature type="sequence conflict" description="In Ref. 3; CAG27071." evidence="17" ref="3">
    <original>E</original>
    <variation>G</variation>
    <location>
        <position position="318"/>
    </location>
</feature>
<feature type="sequence conflict" description="In Ref. 1; CAC83858/CAC83859 and 3; CAG27071." evidence="17" ref="1 3">
    <original>E</original>
    <variation>Q</variation>
    <location>
        <position position="322"/>
    </location>
</feature>
<feature type="sequence conflict" description="In Ref. 1; CAC83858/CAC83859." evidence="17" ref="1">
    <original>A</original>
    <variation>V</variation>
    <location>
        <position position="373"/>
    </location>
</feature>
<feature type="sequence conflict" description="In Ref. 1; CAC83858/CAC83859." evidence="17" ref="1">
    <original>Q</original>
    <variation>H</variation>
    <location>
        <position position="555"/>
    </location>
</feature>
<feature type="sequence conflict" description="In Ref. 1; CAC83858/CAC83859." evidence="17" ref="1">
    <original>K</original>
    <variation>N</variation>
    <location>
        <position position="564"/>
    </location>
</feature>
<feature type="sequence conflict" description="In Ref. 1; CAC83858/CAC83859." evidence="17" ref="1">
    <original>E</original>
    <variation>Q</variation>
    <location>
        <position position="655"/>
    </location>
</feature>
<feature type="sequence conflict" description="In Ref. 1; CAC83858/CAC83859." evidence="17" ref="1">
    <original>T</original>
    <variation>A</variation>
    <location>
        <position position="666"/>
    </location>
</feature>
<feature type="sequence conflict" description="In Ref. 1; CAC83858/CAC83859." evidence="17" ref="1">
    <original>V</original>
    <variation>L</variation>
    <location>
        <position position="687"/>
    </location>
</feature>
<feature type="sequence conflict" description="In Ref. 1; CAC83858/CAC83859." evidence="17" ref="1">
    <original>K</original>
    <variation>N</variation>
    <location>
        <position position="720"/>
    </location>
</feature>
<feature type="sequence conflict" description="In Ref. 1; CAC83858/CAC83859." evidence="17" ref="1">
    <original>D</original>
    <variation>N</variation>
    <location>
        <position position="845"/>
    </location>
</feature>
<feature type="sequence conflict" description="In Ref. 1; CAC83858/CAC83859." evidence="17" ref="1">
    <original>E</original>
    <variation>Q</variation>
    <location>
        <position position="856"/>
    </location>
</feature>
<feature type="sequence conflict" description="In Ref. 1; CAC83858/CAC83859." evidence="17" ref="1">
    <original>R</original>
    <variation>P</variation>
    <location>
        <position position="874"/>
    </location>
</feature>
<feature type="sequence conflict" description="In Ref. 1; CAC83858/CAC83859." evidence="17" ref="1">
    <original>R</original>
    <variation>K</variation>
    <location>
        <position position="965"/>
    </location>
</feature>
<feature type="sequence conflict" description="In Ref. 1; CAC83858/CAC83859." evidence="17" ref="1">
    <original>N</original>
    <variation>D</variation>
    <location>
        <position position="1004"/>
    </location>
</feature>
<feature type="sequence conflict" description="In Ref. 1; CAC83858/CAC83859." evidence="17" ref="1">
    <original>L</original>
    <variation>V</variation>
    <location>
        <position position="1019"/>
    </location>
</feature>
<feature type="sequence conflict" description="In Ref. 1; CAC83858/CAC83859." evidence="17" ref="1">
    <original>L</original>
    <variation>M</variation>
    <location>
        <position position="1039"/>
    </location>
</feature>
<feature type="sequence conflict" description="In Ref. 1; CAC83858/CAC83859." evidence="17" ref="1">
    <original>P</original>
    <variation>L</variation>
    <location>
        <position position="1076"/>
    </location>
</feature>
<feature type="sequence conflict" description="In Ref. 1; CAC83859." evidence="17" ref="1">
    <original>E</original>
    <variation>G</variation>
    <location>
        <position position="1151"/>
    </location>
</feature>
<feature type="sequence conflict" description="In Ref. 1; CAC83859." evidence="17" ref="1">
    <original>I</original>
    <variation>T</variation>
    <location>
        <position position="1292"/>
    </location>
</feature>
<feature type="sequence conflict" description="In Ref. 6; AAI10067." evidence="17" ref="6">
    <original>A</original>
    <variation>R</variation>
    <location>
        <position position="1493"/>
    </location>
</feature>
<feature type="sequence conflict" description="In Ref. 1; CAC83858/CAC83859." evidence="17" ref="1">
    <original>A</original>
    <variation>V</variation>
    <location>
        <position position="1509"/>
    </location>
</feature>
<proteinExistence type="evidence at protein level"/>
<organism>
    <name type="scientific">Homo sapiens</name>
    <name type="common">Human</name>
    <dbReference type="NCBI Taxonomy" id="9606"/>
    <lineage>
        <taxon>Eukaryota</taxon>
        <taxon>Metazoa</taxon>
        <taxon>Chordata</taxon>
        <taxon>Craniata</taxon>
        <taxon>Vertebrata</taxon>
        <taxon>Euteleostomi</taxon>
        <taxon>Mammalia</taxon>
        <taxon>Eutheria</taxon>
        <taxon>Euarchontoglires</taxon>
        <taxon>Primates</taxon>
        <taxon>Haplorrhini</taxon>
        <taxon>Catarrhini</taxon>
        <taxon>Hominidae</taxon>
        <taxon>Homo</taxon>
    </lineage>
</organism>
<name>SYNEM_HUMAN</name>
<dbReference type="EMBL" id="AJ310521">
    <property type="protein sequence ID" value="CAC83858.1"/>
    <property type="molecule type" value="mRNA"/>
</dbReference>
<dbReference type="EMBL" id="AJ310522">
    <property type="protein sequence ID" value="CAC83859.1"/>
    <property type="molecule type" value="mRNA"/>
</dbReference>
<dbReference type="EMBL" id="AF359284">
    <property type="protein sequence ID" value="AAK57487.1"/>
    <property type="molecule type" value="mRNA"/>
</dbReference>
<dbReference type="EMBL" id="AJ697971">
    <property type="protein sequence ID" value="CAG27071.1"/>
    <property type="molecule type" value="mRNA"/>
</dbReference>
<dbReference type="EMBL" id="AB002351">
    <property type="protein sequence ID" value="BAA20810.2"/>
    <property type="status" value="ALT_INIT"/>
    <property type="molecule type" value="mRNA"/>
</dbReference>
<dbReference type="EMBL" id="AC036108">
    <property type="status" value="NOT_ANNOTATED_CDS"/>
    <property type="molecule type" value="Genomic_DNA"/>
</dbReference>
<dbReference type="EMBL" id="AC223423">
    <property type="status" value="NOT_ANNOTATED_CDS"/>
    <property type="molecule type" value="Genomic_DNA"/>
</dbReference>
<dbReference type="EMBL" id="BC110066">
    <property type="protein sequence ID" value="AAI10067.1"/>
    <property type="status" value="ALT_INIT"/>
    <property type="molecule type" value="mRNA"/>
</dbReference>
<dbReference type="EMBL" id="BC151243">
    <property type="protein sequence ID" value="AAI51244.1"/>
    <property type="molecule type" value="mRNA"/>
</dbReference>
<dbReference type="CCDS" id="CCDS73786.1">
    <molecule id="O15061-2"/>
</dbReference>
<dbReference type="CCDS" id="CCDS73787.1">
    <molecule id="O15061-1"/>
</dbReference>
<dbReference type="RefSeq" id="NP_056101.5">
    <molecule id="O15061-2"/>
    <property type="nucleotide sequence ID" value="NM_015286.5"/>
</dbReference>
<dbReference type="RefSeq" id="NP_663780.2">
    <molecule id="O15061-1"/>
    <property type="nucleotide sequence ID" value="NM_145728.3"/>
</dbReference>
<dbReference type="PDB" id="6EWO">
    <property type="method" value="X-ray"/>
    <property type="resolution" value="2.30 A"/>
    <property type="chains" value="C/G=426-434"/>
</dbReference>
<dbReference type="PDBsum" id="6EWO"/>
<dbReference type="SMR" id="O15061"/>
<dbReference type="BioGRID" id="116923">
    <property type="interactions" value="59"/>
</dbReference>
<dbReference type="FunCoup" id="O15061">
    <property type="interactions" value="255"/>
</dbReference>
<dbReference type="IntAct" id="O15061">
    <property type="interactions" value="27"/>
</dbReference>
<dbReference type="MINT" id="O15061"/>
<dbReference type="STRING" id="9606.ENSP00000336775"/>
<dbReference type="GlyCosmos" id="O15061">
    <property type="glycosylation" value="1 site, 1 glycan"/>
</dbReference>
<dbReference type="GlyGen" id="O15061">
    <property type="glycosylation" value="4 sites, 1 O-linked glycan (1 site)"/>
</dbReference>
<dbReference type="iPTMnet" id="O15061"/>
<dbReference type="PhosphoSitePlus" id="O15061"/>
<dbReference type="BioMuta" id="SYNM"/>
<dbReference type="jPOST" id="O15061"/>
<dbReference type="MassIVE" id="O15061"/>
<dbReference type="PaxDb" id="9606-ENSP00000336775"/>
<dbReference type="PeptideAtlas" id="O15061"/>
<dbReference type="ProteomicsDB" id="48411">
    <molecule id="O15061-1"/>
</dbReference>
<dbReference type="ProteomicsDB" id="48412">
    <molecule id="O15061-2"/>
</dbReference>
<dbReference type="ProteomicsDB" id="48413">
    <molecule id="O15061-3"/>
</dbReference>
<dbReference type="Pumba" id="O15061"/>
<dbReference type="Antibodypedia" id="29140">
    <property type="antibodies" value="171 antibodies from 19 providers"/>
</dbReference>
<dbReference type="DNASU" id="23336"/>
<dbReference type="Ensembl" id="ENST00000328642.11">
    <molecule id="O15061-3"/>
    <property type="protein sequence ID" value="ENSP00000330469.8"/>
    <property type="gene ID" value="ENSG00000182253.15"/>
</dbReference>
<dbReference type="Ensembl" id="ENST00000336292.11">
    <molecule id="O15061-1"/>
    <property type="protein sequence ID" value="ENSP00000336775.7"/>
    <property type="gene ID" value="ENSG00000182253.15"/>
</dbReference>
<dbReference type="Ensembl" id="ENST00000594047.2">
    <molecule id="O15061-2"/>
    <property type="protein sequence ID" value="ENSP00000472953.1"/>
    <property type="gene ID" value="ENSG00000182253.15"/>
</dbReference>
<dbReference type="GeneID" id="23336"/>
<dbReference type="KEGG" id="hsa:23336"/>
<dbReference type="MANE-Select" id="ENST00000336292.11">
    <property type="protein sequence ID" value="ENSP00000336775.7"/>
    <property type="RefSeq nucleotide sequence ID" value="NM_145728.3"/>
    <property type="RefSeq protein sequence ID" value="NP_663780.2"/>
</dbReference>
<dbReference type="UCSC" id="uc032crv.2">
    <molecule id="O15061-1"/>
    <property type="organism name" value="human"/>
</dbReference>
<dbReference type="AGR" id="HGNC:24466"/>
<dbReference type="CTD" id="23336"/>
<dbReference type="DisGeNET" id="23336"/>
<dbReference type="GeneCards" id="SYNM"/>
<dbReference type="HGNC" id="HGNC:24466">
    <property type="gene designation" value="SYNM"/>
</dbReference>
<dbReference type="HPA" id="ENSG00000182253">
    <property type="expression patterns" value="Tissue enhanced (intestine, skeletal muscle, urinary bladder)"/>
</dbReference>
<dbReference type="MIM" id="606087">
    <property type="type" value="gene"/>
</dbReference>
<dbReference type="neXtProt" id="NX_O15061"/>
<dbReference type="OpenTargets" id="ENSG00000182253"/>
<dbReference type="PharmGKB" id="PA164726408"/>
<dbReference type="VEuPathDB" id="HostDB:ENSG00000182253"/>
<dbReference type="eggNOG" id="ENOG502QTUH">
    <property type="taxonomic scope" value="Eukaryota"/>
</dbReference>
<dbReference type="GeneTree" id="ENSGT00940000159268"/>
<dbReference type="InParanoid" id="O15061"/>
<dbReference type="OMA" id="WTEDIEN"/>
<dbReference type="OrthoDB" id="9949055at2759"/>
<dbReference type="PAN-GO" id="O15061">
    <property type="GO annotations" value="9 GO annotations based on evolutionary models"/>
</dbReference>
<dbReference type="PhylomeDB" id="O15061"/>
<dbReference type="PathwayCommons" id="O15061"/>
<dbReference type="SignaLink" id="O15061"/>
<dbReference type="BioGRID-ORCS" id="23336">
    <property type="hits" value="9 hits in 357 CRISPR screens"/>
</dbReference>
<dbReference type="ChiTaRS" id="SYNM">
    <property type="organism name" value="human"/>
</dbReference>
<dbReference type="GenomeRNAi" id="23336"/>
<dbReference type="Pharos" id="O15061">
    <property type="development level" value="Tbio"/>
</dbReference>
<dbReference type="PRO" id="PR:O15061"/>
<dbReference type="Proteomes" id="UP000005640">
    <property type="component" value="Chromosome 15"/>
</dbReference>
<dbReference type="RNAct" id="O15061">
    <property type="molecule type" value="protein"/>
</dbReference>
<dbReference type="Bgee" id="ENSG00000182253">
    <property type="expression patterns" value="Expressed in seminal vesicle and 208 other cell types or tissues"/>
</dbReference>
<dbReference type="ExpressionAtlas" id="O15061">
    <property type="expression patterns" value="baseline and differential"/>
</dbReference>
<dbReference type="GO" id="GO:0005912">
    <property type="term" value="C:adherens junction"/>
    <property type="evidence" value="ECO:0007669"/>
    <property type="project" value="UniProtKB-SubCell"/>
</dbReference>
<dbReference type="GO" id="GO:0043034">
    <property type="term" value="C:costamere"/>
    <property type="evidence" value="ECO:0000314"/>
    <property type="project" value="UniProtKB"/>
</dbReference>
<dbReference type="GO" id="GO:0005882">
    <property type="term" value="C:intermediate filament"/>
    <property type="evidence" value="ECO:0000314"/>
    <property type="project" value="UniProtKB"/>
</dbReference>
<dbReference type="GO" id="GO:0045111">
    <property type="term" value="C:intermediate filament cytoskeleton"/>
    <property type="evidence" value="ECO:0000314"/>
    <property type="project" value="HPA"/>
</dbReference>
<dbReference type="GO" id="GO:0060053">
    <property type="term" value="C:neurofilament cytoskeleton"/>
    <property type="evidence" value="ECO:0000318"/>
    <property type="project" value="GO_Central"/>
</dbReference>
<dbReference type="GO" id="GO:0042383">
    <property type="term" value="C:sarcolemma"/>
    <property type="evidence" value="ECO:0000318"/>
    <property type="project" value="GO_Central"/>
</dbReference>
<dbReference type="GO" id="GO:0019215">
    <property type="term" value="F:intermediate filament binding"/>
    <property type="evidence" value="ECO:0000250"/>
    <property type="project" value="UniProtKB"/>
</dbReference>
<dbReference type="GO" id="GO:0005200">
    <property type="term" value="F:structural constituent of cytoskeleton"/>
    <property type="evidence" value="ECO:0000314"/>
    <property type="project" value="UniProtKB"/>
</dbReference>
<dbReference type="GO" id="GO:0008307">
    <property type="term" value="F:structural constituent of muscle"/>
    <property type="evidence" value="ECO:0000314"/>
    <property type="project" value="UniProtKB"/>
</dbReference>
<dbReference type="GO" id="GO:0017166">
    <property type="term" value="F:vinculin binding"/>
    <property type="evidence" value="ECO:0000314"/>
    <property type="project" value="UniProtKB"/>
</dbReference>
<dbReference type="GO" id="GO:0031443">
    <property type="term" value="P:fast-twitch skeletal muscle fiber contraction"/>
    <property type="evidence" value="ECO:0000318"/>
    <property type="project" value="GO_Central"/>
</dbReference>
<dbReference type="GO" id="GO:0045104">
    <property type="term" value="P:intermediate filament cytoskeleton organization"/>
    <property type="evidence" value="ECO:0000304"/>
    <property type="project" value="UniProtKB"/>
</dbReference>
<dbReference type="FunFam" id="1.20.5.1160:FF:000017">
    <property type="entry name" value="SYNM isoform 4"/>
    <property type="match status" value="1"/>
</dbReference>
<dbReference type="FunFam" id="1.20.5.170:FF:000108">
    <property type="entry name" value="SYNM isoform 4"/>
    <property type="match status" value="1"/>
</dbReference>
<dbReference type="Gene3D" id="1.20.5.170">
    <property type="match status" value="1"/>
</dbReference>
<dbReference type="Gene3D" id="1.20.5.1160">
    <property type="entry name" value="Vasodilator-stimulated phosphoprotein"/>
    <property type="match status" value="1"/>
</dbReference>
<dbReference type="InterPro" id="IPR018039">
    <property type="entry name" value="IF_conserved"/>
</dbReference>
<dbReference type="InterPro" id="IPR039008">
    <property type="entry name" value="IF_rod_dom"/>
</dbReference>
<dbReference type="InterPro" id="IPR030634">
    <property type="entry name" value="SYNM"/>
</dbReference>
<dbReference type="PANTHER" id="PTHR47136">
    <property type="entry name" value="SYNEMIN"/>
    <property type="match status" value="1"/>
</dbReference>
<dbReference type="PANTHER" id="PTHR47136:SF1">
    <property type="entry name" value="SYNEMIN"/>
    <property type="match status" value="1"/>
</dbReference>
<dbReference type="Pfam" id="PF00038">
    <property type="entry name" value="Filament"/>
    <property type="match status" value="1"/>
</dbReference>
<dbReference type="SMART" id="SM01391">
    <property type="entry name" value="Filament"/>
    <property type="match status" value="1"/>
</dbReference>
<dbReference type="SUPFAM" id="SSF64593">
    <property type="entry name" value="Intermediate filament protein, coiled coil region"/>
    <property type="match status" value="2"/>
</dbReference>
<dbReference type="PROSITE" id="PS00226">
    <property type="entry name" value="IF_ROD_1"/>
    <property type="match status" value="1"/>
</dbReference>
<dbReference type="PROSITE" id="PS51842">
    <property type="entry name" value="IF_ROD_2"/>
    <property type="match status" value="1"/>
</dbReference>
<protein>
    <recommendedName>
        <fullName evidence="17">Synemin</fullName>
    </recommendedName>
    <alternativeName>
        <fullName>Desmuslin</fullName>
    </alternativeName>
</protein>
<evidence type="ECO:0000250" key="1"/>
<evidence type="ECO:0000250" key="2">
    <source>
        <dbReference type="UniProtKB" id="Q70IV5"/>
    </source>
</evidence>
<evidence type="ECO:0000255" key="3">
    <source>
        <dbReference type="PROSITE-ProRule" id="PRU01188"/>
    </source>
</evidence>
<evidence type="ECO:0000256" key="4">
    <source>
        <dbReference type="SAM" id="MobiDB-lite"/>
    </source>
</evidence>
<evidence type="ECO:0000269" key="5">
    <source>
    </source>
</evidence>
<evidence type="ECO:0000269" key="6">
    <source>
    </source>
</evidence>
<evidence type="ECO:0000269" key="7">
    <source>
    </source>
</evidence>
<evidence type="ECO:0000269" key="8">
    <source>
    </source>
</evidence>
<evidence type="ECO:0000269" key="9">
    <source>
    </source>
</evidence>
<evidence type="ECO:0000269" key="10">
    <source>
    </source>
</evidence>
<evidence type="ECO:0000269" key="11">
    <source>
    </source>
</evidence>
<evidence type="ECO:0000269" key="12">
    <source>
    </source>
</evidence>
<evidence type="ECO:0000269" key="13">
    <source ref="4"/>
</evidence>
<evidence type="ECO:0000303" key="14">
    <source>
    </source>
</evidence>
<evidence type="ECO:0000303" key="15">
    <source>
    </source>
</evidence>
<evidence type="ECO:0000303" key="16">
    <source ref="3"/>
</evidence>
<evidence type="ECO:0000305" key="17"/>
<evidence type="ECO:0000312" key="18">
    <source>
        <dbReference type="HGNC" id="HGNC:24466"/>
    </source>
</evidence>
<evidence type="ECO:0007744" key="19">
    <source>
    </source>
</evidence>
<evidence type="ECO:0007744" key="20">
    <source>
    </source>
</evidence>
<evidence type="ECO:0007744" key="21">
    <source>
    </source>
</evidence>
<evidence type="ECO:0007744" key="22">
    <source>
    </source>
</evidence>
<evidence type="ECO:0007744" key="23">
    <source>
    </source>
</evidence>
<evidence type="ECO:0007744" key="24">
    <source>
    </source>
</evidence>
<comment type="function">
    <text evidence="5 10 11">Type-VI intermediate filament (IF) which plays an important cytoskeletal role within the muscle cell cytoskeleton. It forms heteromeric IFs with desmin and/or vimentin, and via its interaction with cytoskeletal proteins alpha-dystrobrevin, dystrophin, talin-1, utrophin and vinculin, is able to link these heteromeric IFs to adherens-type junctions, such as to the costameres, neuromuscular junctions, and myotendinous junctions within striated muscle cells.</text>
</comment>
<comment type="subunit">
    <text evidence="1 5 7 10 11 12">Interacts with GFAP and VIM (By similarity). Isoform 1 interacts with TLN1 and VCL. Isoform 2 interacts with DES and DTNA. Isoform 1 and isoform 2 interact with DMD and UTRN.</text>
</comment>
<comment type="interaction">
    <interactant intactId="EBI-7843148">
        <id>O15061</id>
    </interactant>
    <interactant intactId="EBI-681210">
        <id>Q8WZ42</id>
        <label>TTN</label>
    </interactant>
    <organismsDiffer>false</organismsDiffer>
    <experiments>3</experiments>
</comment>
<comment type="subcellular location">
    <subcellularLocation>
        <location>Cytoplasm</location>
        <location>Cytoskeleton</location>
    </subcellularLocation>
    <subcellularLocation>
        <location>Cell junction</location>
        <location>Adherens junction</location>
    </subcellularLocation>
    <text>There are at least two distinct SYNM subpopulations, one in which SYMN interacts with DES within the Z-lines, and another in which it interacts with both DTNA and DES at the costamere.</text>
</comment>
<comment type="alternative products">
    <event type="alternative splicing"/>
    <isoform>
        <id>O15061-1</id>
        <name>1</name>
        <name>Alpha</name>
        <sequence type="displayed"/>
    </isoform>
    <isoform>
        <id>O15061-2</id>
        <name>2</name>
        <name>Beta</name>
        <sequence type="described" ref="VSP_002465"/>
    </isoform>
    <isoform>
        <id>O15061-3</id>
        <name>3</name>
        <sequence type="described" ref="VSP_036478 VSP_036479"/>
    </isoform>
</comment>
<comment type="tissue specificity">
    <text evidence="5 7">Isoform 2 is strongly detected in adult heart, fetal skeletal muscles and fetal heart. Isoform 1 is weakly detected in fetal heart and also in fetal skeletal muscle. Isoform 1 and isoform 2 are detected in adult bladder (at protein level). The mRNA is predominantly expressed in heart and muscle with some expression in brain which may be due to tissue-specific isoforms.</text>
</comment>
<comment type="developmental stage">
    <text evidence="8">In lens, first detected at 16 weeks when expression is weakly and uniformly distributed. Subsequently, expression becomes much stronger in the epithelium of the anterior part at 25 weeks and later. In retina, weakly expressed at 15 weeks in the nerve fiber and ganglion cell layers (NFL and GCL). From 25 weeks onwards, much stronger expression is observed in the endfeet of Mueller cells, the NFL, and GCL, and much lower expression is observed in a minor subpopulation of cells in the inner cell layer (INL). At 30 and 36 weeks, expression remains in the neural retina, and subsequently becomes stronger in the NFL, GCL, and INL and is decreased in Mueller cells. At 36 weeks, also expressed at the external border of the outer nuclear layer (ONL) (at protein level).</text>
</comment>
<comment type="similarity">
    <text evidence="3">Belongs to the intermediate filament family.</text>
</comment>
<comment type="sequence caution" evidence="17">
    <conflict type="erroneous initiation">
        <sequence resource="EMBL-CDS" id="AAI10067"/>
    </conflict>
</comment>
<comment type="sequence caution" evidence="17">
    <conflict type="erroneous initiation">
        <sequence resource="EMBL-CDS" id="BAA20810"/>
    </conflict>
</comment>
<accession>O15061</accession>
<accession>A7E2Y2</accession>
<accession>Q2TBJ4</accession>
<accession>Q5NJJ9</accession>
<accession>Q8TE61</accession>
<accession>Q8TE62</accession>